<sequence length="84" mass="9557">MPYLLISTQIRMEVGPTVVGDEHSDPELMQHLGASKRSVLGNNFSEYYVNDPPRIVLDKLERRGFRVLSMTGVGQTLVWCLHKE</sequence>
<comment type="function">
    <text evidence="1">Mediates tetrahydrobiopterin inhibition of GTP cyclohydrolase 1. This inhibition is reversed by L-phenylalanine (By similarity).</text>
</comment>
<comment type="subunit">
    <text evidence="1">Homopentamer. Forms a complex with GCH1 where a GCH1 homodecamer is sandwiched by two GFRP homopentamers. Interacts with GCH1 (By similarity).</text>
</comment>
<comment type="subcellular location">
    <subcellularLocation>
        <location evidence="1">Nucleus</location>
    </subcellularLocation>
    <subcellularLocation>
        <location evidence="1">Nucleus membrane</location>
    </subcellularLocation>
    <subcellularLocation>
        <location evidence="1">Cytoplasm</location>
        <location evidence="1">Cytosol</location>
    </subcellularLocation>
</comment>
<comment type="similarity">
    <text evidence="2">Belongs to the GFRP family.</text>
</comment>
<feature type="chain" id="PRO_0000317691" description="GTP cyclohydrolase 1 feedback regulatory protein">
    <location>
        <begin position="1"/>
        <end position="84"/>
    </location>
</feature>
<organism>
    <name type="scientific">Bos taurus</name>
    <name type="common">Bovine</name>
    <dbReference type="NCBI Taxonomy" id="9913"/>
    <lineage>
        <taxon>Eukaryota</taxon>
        <taxon>Metazoa</taxon>
        <taxon>Chordata</taxon>
        <taxon>Craniata</taxon>
        <taxon>Vertebrata</taxon>
        <taxon>Euteleostomi</taxon>
        <taxon>Mammalia</taxon>
        <taxon>Eutheria</taxon>
        <taxon>Laurasiatheria</taxon>
        <taxon>Artiodactyla</taxon>
        <taxon>Ruminantia</taxon>
        <taxon>Pecora</taxon>
        <taxon>Bovidae</taxon>
        <taxon>Bovinae</taxon>
        <taxon>Bos</taxon>
    </lineage>
</organism>
<accession>Q32L41</accession>
<reference key="1">
    <citation type="submission" date="2005-11" db="EMBL/GenBank/DDBJ databases">
        <authorList>
            <consortium name="NIH - Mammalian Gene Collection (MGC) project"/>
        </authorList>
    </citation>
    <scope>NUCLEOTIDE SEQUENCE [LARGE SCALE MRNA]</scope>
    <source>
        <strain>Crossbred X Angus</strain>
        <tissue>Liver</tissue>
    </source>
</reference>
<dbReference type="EMBL" id="BC109778">
    <property type="protein sequence ID" value="AAI09779.1"/>
    <property type="molecule type" value="mRNA"/>
</dbReference>
<dbReference type="RefSeq" id="NP_001107998.1">
    <property type="nucleotide sequence ID" value="NM_001114526.2"/>
</dbReference>
<dbReference type="SMR" id="Q32L41"/>
<dbReference type="FunCoup" id="Q32L41">
    <property type="interactions" value="125"/>
</dbReference>
<dbReference type="STRING" id="9913.ENSBTAP00000017922"/>
<dbReference type="PaxDb" id="9913-ENSBTAP00000017922"/>
<dbReference type="GeneID" id="617650"/>
<dbReference type="KEGG" id="bta:617650"/>
<dbReference type="CTD" id="2644"/>
<dbReference type="VEuPathDB" id="HostDB:ENSBTAG00000013477"/>
<dbReference type="eggNOG" id="ENOG502S4A0">
    <property type="taxonomic scope" value="Eukaryota"/>
</dbReference>
<dbReference type="HOGENOM" id="CLU_195651_0_0_1"/>
<dbReference type="InParanoid" id="Q32L41"/>
<dbReference type="OMA" id="PNLMHYL"/>
<dbReference type="OrthoDB" id="64291at2759"/>
<dbReference type="TreeFam" id="TF329303"/>
<dbReference type="Reactome" id="R-BTA-1474151">
    <property type="pathway name" value="Tetrahydrobiopterin (BH4) synthesis, recycling, salvage and regulation"/>
</dbReference>
<dbReference type="Proteomes" id="UP000009136">
    <property type="component" value="Chromosome 10"/>
</dbReference>
<dbReference type="Bgee" id="ENSBTAG00000013477">
    <property type="expression patterns" value="Expressed in liver and 106 other cell types or tissues"/>
</dbReference>
<dbReference type="GO" id="GO:0005737">
    <property type="term" value="C:cytoplasm"/>
    <property type="evidence" value="ECO:0000318"/>
    <property type="project" value="GO_Central"/>
</dbReference>
<dbReference type="GO" id="GO:0005829">
    <property type="term" value="C:cytosol"/>
    <property type="evidence" value="ECO:0007669"/>
    <property type="project" value="UniProtKB-SubCell"/>
</dbReference>
<dbReference type="GO" id="GO:0031965">
    <property type="term" value="C:nuclear membrane"/>
    <property type="evidence" value="ECO:0007669"/>
    <property type="project" value="UniProtKB-SubCell"/>
</dbReference>
<dbReference type="GO" id="GO:0005634">
    <property type="term" value="C:nucleus"/>
    <property type="evidence" value="ECO:0000318"/>
    <property type="project" value="GO_Central"/>
</dbReference>
<dbReference type="GO" id="GO:0044549">
    <property type="term" value="F:GTP cyclohydrolase binding"/>
    <property type="evidence" value="ECO:0000318"/>
    <property type="project" value="GO_Central"/>
</dbReference>
<dbReference type="GO" id="GO:0009890">
    <property type="term" value="P:negative regulation of biosynthetic process"/>
    <property type="evidence" value="ECO:0007669"/>
    <property type="project" value="InterPro"/>
</dbReference>
<dbReference type="FunFam" id="3.30.1410.10:FF:000001">
    <property type="entry name" value="GTP cyclohydrolase 1 feedback regulatory protein"/>
    <property type="match status" value="1"/>
</dbReference>
<dbReference type="Gene3D" id="3.30.1410.10">
    <property type="entry name" value="GTP cyclohydrolase I feedback regulatory protein GFRP"/>
    <property type="match status" value="1"/>
</dbReference>
<dbReference type="InterPro" id="IPR036717">
    <property type="entry name" value="GFRP_sf"/>
</dbReference>
<dbReference type="InterPro" id="IPR009112">
    <property type="entry name" value="GTP_CycHdrlase_I_reg"/>
</dbReference>
<dbReference type="PANTHER" id="PTHR16852">
    <property type="entry name" value="GTP CYCLOHYDROLASE 1 FEEDBACK REGULATORY PROTEIN"/>
    <property type="match status" value="1"/>
</dbReference>
<dbReference type="PANTHER" id="PTHR16852:SF2">
    <property type="entry name" value="GTP CYCLOHYDROLASE 1 FEEDBACK REGULATORY PROTEIN"/>
    <property type="match status" value="1"/>
</dbReference>
<dbReference type="Pfam" id="PF06399">
    <property type="entry name" value="GFRP"/>
    <property type="match status" value="1"/>
</dbReference>
<dbReference type="SUPFAM" id="SSF69761">
    <property type="entry name" value="GTP cyclohydrolase I feedback regulatory protein, GFRP"/>
    <property type="match status" value="1"/>
</dbReference>
<gene>
    <name type="primary">GCHFR</name>
</gene>
<name>GFRP_BOVIN</name>
<proteinExistence type="inferred from homology"/>
<evidence type="ECO:0000250" key="1"/>
<evidence type="ECO:0000305" key="2"/>
<keyword id="KW-0963">Cytoplasm</keyword>
<keyword id="KW-0472">Membrane</keyword>
<keyword id="KW-0539">Nucleus</keyword>
<keyword id="KW-1185">Reference proteome</keyword>
<protein>
    <recommendedName>
        <fullName>GTP cyclohydrolase 1 feedback regulatory protein</fullName>
        <shortName>GFRP</shortName>
    </recommendedName>
    <alternativeName>
        <fullName>GTP cyclohydrolase I feedback regulatory protein</fullName>
    </alternativeName>
</protein>